<feature type="chain" id="PRO_1000050824" description="D-aminoacyl-tRNA deacylase">
    <location>
        <begin position="1"/>
        <end position="149"/>
    </location>
</feature>
<feature type="short sequence motif" description="Gly-cisPro motif, important for rejection of L-amino acids" evidence="1">
    <location>
        <begin position="137"/>
        <end position="138"/>
    </location>
</feature>
<protein>
    <recommendedName>
        <fullName evidence="1">D-aminoacyl-tRNA deacylase</fullName>
        <shortName evidence="1">DTD</shortName>
        <ecNumber evidence="1">3.1.1.96</ecNumber>
    </recommendedName>
    <alternativeName>
        <fullName evidence="1">Gly-tRNA(Ala) deacylase</fullName>
    </alternativeName>
</protein>
<gene>
    <name evidence="1" type="primary">dtd</name>
    <name type="ordered locus">CLB_3087</name>
</gene>
<proteinExistence type="inferred from homology"/>
<comment type="function">
    <text evidence="1">An aminoacyl-tRNA editing enzyme that deacylates mischarged D-aminoacyl-tRNAs. Also deacylates mischarged glycyl-tRNA(Ala), protecting cells against glycine mischarging by AlaRS. Acts via tRNA-based rather than protein-based catalysis; rejects L-amino acids rather than detecting D-amino acids in the active site. By recycling D-aminoacyl-tRNA to D-amino acids and free tRNA molecules, this enzyme counteracts the toxicity associated with the formation of D-aminoacyl-tRNA entities in vivo and helps enforce protein L-homochirality.</text>
</comment>
<comment type="catalytic activity">
    <reaction evidence="1">
        <text>glycyl-tRNA(Ala) + H2O = tRNA(Ala) + glycine + H(+)</text>
        <dbReference type="Rhea" id="RHEA:53744"/>
        <dbReference type="Rhea" id="RHEA-COMP:9657"/>
        <dbReference type="Rhea" id="RHEA-COMP:13640"/>
        <dbReference type="ChEBI" id="CHEBI:15377"/>
        <dbReference type="ChEBI" id="CHEBI:15378"/>
        <dbReference type="ChEBI" id="CHEBI:57305"/>
        <dbReference type="ChEBI" id="CHEBI:78442"/>
        <dbReference type="ChEBI" id="CHEBI:78522"/>
        <dbReference type="EC" id="3.1.1.96"/>
    </reaction>
</comment>
<comment type="catalytic activity">
    <reaction evidence="1">
        <text>a D-aminoacyl-tRNA + H2O = a tRNA + a D-alpha-amino acid + H(+)</text>
        <dbReference type="Rhea" id="RHEA:13953"/>
        <dbReference type="Rhea" id="RHEA-COMP:10123"/>
        <dbReference type="Rhea" id="RHEA-COMP:10124"/>
        <dbReference type="ChEBI" id="CHEBI:15377"/>
        <dbReference type="ChEBI" id="CHEBI:15378"/>
        <dbReference type="ChEBI" id="CHEBI:59871"/>
        <dbReference type="ChEBI" id="CHEBI:78442"/>
        <dbReference type="ChEBI" id="CHEBI:79333"/>
        <dbReference type="EC" id="3.1.1.96"/>
    </reaction>
</comment>
<comment type="subunit">
    <text evidence="1">Homodimer.</text>
</comment>
<comment type="subcellular location">
    <subcellularLocation>
        <location evidence="1">Cytoplasm</location>
    </subcellularLocation>
</comment>
<comment type="domain">
    <text evidence="1">A Gly-cisPro motif from one monomer fits into the active site of the other monomer to allow specific chiral rejection of L-amino acids.</text>
</comment>
<comment type="similarity">
    <text evidence="1">Belongs to the DTD family.</text>
</comment>
<accession>A7FY07</accession>
<evidence type="ECO:0000255" key="1">
    <source>
        <dbReference type="HAMAP-Rule" id="MF_00518"/>
    </source>
</evidence>
<dbReference type="EC" id="3.1.1.96" evidence="1"/>
<dbReference type="EMBL" id="CP000726">
    <property type="protein sequence ID" value="ABS35128.1"/>
    <property type="molecule type" value="Genomic_DNA"/>
</dbReference>
<dbReference type="RefSeq" id="WP_012048079.1">
    <property type="nucleotide sequence ID" value="NC_009697.1"/>
</dbReference>
<dbReference type="SMR" id="A7FY07"/>
<dbReference type="GeneID" id="5187267"/>
<dbReference type="KEGG" id="cba:CLB_3087"/>
<dbReference type="HOGENOM" id="CLU_076901_1_0_9"/>
<dbReference type="GO" id="GO:0005737">
    <property type="term" value="C:cytoplasm"/>
    <property type="evidence" value="ECO:0007669"/>
    <property type="project" value="UniProtKB-SubCell"/>
</dbReference>
<dbReference type="GO" id="GO:0051500">
    <property type="term" value="F:D-tyrosyl-tRNA(Tyr) deacylase activity"/>
    <property type="evidence" value="ECO:0007669"/>
    <property type="project" value="TreeGrafter"/>
</dbReference>
<dbReference type="GO" id="GO:0106026">
    <property type="term" value="F:Gly-tRNA(Ala) deacylase activity"/>
    <property type="evidence" value="ECO:0007669"/>
    <property type="project" value="UniProtKB-UniRule"/>
</dbReference>
<dbReference type="GO" id="GO:0043908">
    <property type="term" value="F:Ser(Gly)-tRNA(Ala) hydrolase activity"/>
    <property type="evidence" value="ECO:0007669"/>
    <property type="project" value="UniProtKB-UniRule"/>
</dbReference>
<dbReference type="GO" id="GO:0000049">
    <property type="term" value="F:tRNA binding"/>
    <property type="evidence" value="ECO:0007669"/>
    <property type="project" value="UniProtKB-UniRule"/>
</dbReference>
<dbReference type="GO" id="GO:0019478">
    <property type="term" value="P:D-amino acid catabolic process"/>
    <property type="evidence" value="ECO:0007669"/>
    <property type="project" value="UniProtKB-UniRule"/>
</dbReference>
<dbReference type="CDD" id="cd00563">
    <property type="entry name" value="Dtyr_deacylase"/>
    <property type="match status" value="1"/>
</dbReference>
<dbReference type="FunFam" id="3.50.80.10:FF:000001">
    <property type="entry name" value="D-aminoacyl-tRNA deacylase"/>
    <property type="match status" value="1"/>
</dbReference>
<dbReference type="Gene3D" id="3.50.80.10">
    <property type="entry name" value="D-tyrosyl-tRNA(Tyr) deacylase"/>
    <property type="match status" value="1"/>
</dbReference>
<dbReference type="HAMAP" id="MF_00518">
    <property type="entry name" value="Deacylase_Dtd"/>
    <property type="match status" value="1"/>
</dbReference>
<dbReference type="InterPro" id="IPR003732">
    <property type="entry name" value="Daa-tRNA_deacyls_DTD"/>
</dbReference>
<dbReference type="InterPro" id="IPR023509">
    <property type="entry name" value="DTD-like_sf"/>
</dbReference>
<dbReference type="NCBIfam" id="TIGR00256">
    <property type="entry name" value="D-aminoacyl-tRNA deacylase"/>
    <property type="match status" value="1"/>
</dbReference>
<dbReference type="PANTHER" id="PTHR10472:SF5">
    <property type="entry name" value="D-AMINOACYL-TRNA DEACYLASE 1"/>
    <property type="match status" value="1"/>
</dbReference>
<dbReference type="PANTHER" id="PTHR10472">
    <property type="entry name" value="D-TYROSYL-TRNA TYR DEACYLASE"/>
    <property type="match status" value="1"/>
</dbReference>
<dbReference type="Pfam" id="PF02580">
    <property type="entry name" value="Tyr_Deacylase"/>
    <property type="match status" value="1"/>
</dbReference>
<dbReference type="SUPFAM" id="SSF69500">
    <property type="entry name" value="DTD-like"/>
    <property type="match status" value="1"/>
</dbReference>
<organism>
    <name type="scientific">Clostridium botulinum (strain ATCC 19397 / Type A)</name>
    <dbReference type="NCBI Taxonomy" id="441770"/>
    <lineage>
        <taxon>Bacteria</taxon>
        <taxon>Bacillati</taxon>
        <taxon>Bacillota</taxon>
        <taxon>Clostridia</taxon>
        <taxon>Eubacteriales</taxon>
        <taxon>Clostridiaceae</taxon>
        <taxon>Clostridium</taxon>
    </lineage>
</organism>
<name>DTD_CLOB1</name>
<sequence length="149" mass="16676">MRAVVQRVISSKVEVDGRVIGSIGKGLNVLLGISKEDTEEDIKYLKEKIINLRIFEDENEKLNKSLLDIGGDIIIVSQFTLYGDCRKGRRPSFIEALGGEEAYILYNKFVESIKKEVNNVATGEFGADMKVYIENDGPVTILLDSKKTF</sequence>
<reference key="1">
    <citation type="journal article" date="2007" name="PLoS ONE">
        <title>Analysis of the neurotoxin complex genes in Clostridium botulinum A1-A4 and B1 strains: BoNT/A3, /Ba4 and /B1 clusters are located within plasmids.</title>
        <authorList>
            <person name="Smith T.J."/>
            <person name="Hill K.K."/>
            <person name="Foley B.T."/>
            <person name="Detter J.C."/>
            <person name="Munk A.C."/>
            <person name="Bruce D.C."/>
            <person name="Doggett N.A."/>
            <person name="Smith L.A."/>
            <person name="Marks J.D."/>
            <person name="Xie G."/>
            <person name="Brettin T.S."/>
        </authorList>
    </citation>
    <scope>NUCLEOTIDE SEQUENCE [LARGE SCALE GENOMIC DNA]</scope>
    <source>
        <strain>ATCC 19397 / Type A</strain>
    </source>
</reference>
<keyword id="KW-0963">Cytoplasm</keyword>
<keyword id="KW-0378">Hydrolase</keyword>
<keyword id="KW-0694">RNA-binding</keyword>
<keyword id="KW-0820">tRNA-binding</keyword>